<gene>
    <name type="primary">Qrfp</name>
    <name type="synonym">P518</name>
</gene>
<comment type="function">
    <text evidence="6">Stimulates feeding and grooming behavior, metabolic rate and locomotor activity and increases blood pressure. May have orexigenic activity. May promote aldosterone secretion by the adrenal gland.</text>
</comment>
<comment type="subunit">
    <text>Ligand for the G-protein coupled receptor QRFPR/GPR103.</text>
</comment>
<comment type="subcellular location">
    <subcellularLocation>
        <location>Secreted</location>
    </subcellularLocation>
</comment>
<comment type="tissue specificity">
    <text evidence="4 5">Expressed in the brain with highest expression levels in the hypothalamus and optic nerve. Also expressed in the trachea and mammary gland.</text>
</comment>
<comment type="similarity">
    <text evidence="7">Belongs to the RFamide neuropeptide family.</text>
</comment>
<evidence type="ECO:0000250" key="1"/>
<evidence type="ECO:0000255" key="2"/>
<evidence type="ECO:0000256" key="3">
    <source>
        <dbReference type="SAM" id="MobiDB-lite"/>
    </source>
</evidence>
<evidence type="ECO:0000269" key="4">
    <source>
    </source>
</evidence>
<evidence type="ECO:0000269" key="5">
    <source>
    </source>
</evidence>
<evidence type="ECO:0000269" key="6">
    <source>
    </source>
</evidence>
<evidence type="ECO:0000305" key="7"/>
<evidence type="ECO:0000312" key="8">
    <source>
        <dbReference type="EMBL" id="AAR24355.1"/>
    </source>
</evidence>
<name>OX26_RAT</name>
<sequence>MRCLCSWLCLLLPLSACFPLLDRRGPTDIGDIGARMSWVQLTEGHTPRSVQSPRPQALLVVAKEQQASRREHTGFRLGRQDSGSEATGFLPTDSEKASGPLGTLAEELSSYSRRKGGFSFRFGR</sequence>
<feature type="signal peptide" evidence="2">
    <location>
        <begin position="1"/>
        <end position="17"/>
    </location>
</feature>
<feature type="propeptide" id="PRO_0000010090" evidence="1">
    <location>
        <begin position="18"/>
        <end position="79"/>
    </location>
</feature>
<feature type="peptide" id="PRO_0000010091" description="QRF-amide" evidence="6">
    <location>
        <begin position="80"/>
        <end position="122"/>
    </location>
</feature>
<feature type="region of interest" description="Disordered" evidence="3">
    <location>
        <begin position="63"/>
        <end position="100"/>
    </location>
</feature>
<feature type="modified residue" description="Pyrrolidone carboxylic acid" evidence="6">
    <location>
        <position position="80"/>
    </location>
</feature>
<feature type="modified residue" description="Phenylalanine amide" evidence="6">
    <location>
        <position position="122"/>
    </location>
</feature>
<dbReference type="EMBL" id="AB109627">
    <property type="protein sequence ID" value="BAC98936.1"/>
    <property type="molecule type" value="mRNA"/>
</dbReference>
<dbReference type="EMBL" id="AY438327">
    <property type="protein sequence ID" value="AAR24355.1"/>
    <property type="molecule type" value="mRNA"/>
</dbReference>
<dbReference type="RefSeq" id="NP_937843.1">
    <property type="nucleotide sequence ID" value="NM_198200.1"/>
</dbReference>
<dbReference type="RefSeq" id="XP_003749488.1">
    <property type="nucleotide sequence ID" value="XM_003749440.3"/>
</dbReference>
<dbReference type="RefSeq" id="XP_008759893.1">
    <property type="nucleotide sequence ID" value="XM_008761671.2"/>
</dbReference>
<dbReference type="SMR" id="P83860"/>
<dbReference type="FunCoup" id="P83860">
    <property type="interactions" value="47"/>
</dbReference>
<dbReference type="STRING" id="10116.ENSRNOP00000064225"/>
<dbReference type="PaxDb" id="10116-ENSRNOP00000064225"/>
<dbReference type="Ensembl" id="ENSRNOT00000073731.3">
    <property type="protein sequence ID" value="ENSRNOP00000066916.1"/>
    <property type="gene ID" value="ENSRNOG00000046473.3"/>
</dbReference>
<dbReference type="GeneID" id="379044"/>
<dbReference type="KEGG" id="rno:379044"/>
<dbReference type="UCSC" id="RGD:735020">
    <property type="organism name" value="rat"/>
</dbReference>
<dbReference type="AGR" id="RGD:735020"/>
<dbReference type="CTD" id="347148"/>
<dbReference type="RGD" id="735020">
    <property type="gene designation" value="Qrfp"/>
</dbReference>
<dbReference type="eggNOG" id="ENOG502S84J">
    <property type="taxonomic scope" value="Eukaryota"/>
</dbReference>
<dbReference type="GeneTree" id="ENSGT00390000015756"/>
<dbReference type="HOGENOM" id="CLU_155319_0_0_1"/>
<dbReference type="InParanoid" id="P83860"/>
<dbReference type="OMA" id="TGREMSW"/>
<dbReference type="OrthoDB" id="9831857at2759"/>
<dbReference type="PhylomeDB" id="P83860"/>
<dbReference type="TreeFam" id="TF336317"/>
<dbReference type="Reactome" id="R-RNO-389397">
    <property type="pathway name" value="Orexin and neuropeptides FF and QRFP bind to their respective receptors"/>
</dbReference>
<dbReference type="Reactome" id="R-RNO-416476">
    <property type="pathway name" value="G alpha (q) signalling events"/>
</dbReference>
<dbReference type="PRO" id="PR:P83860"/>
<dbReference type="Proteomes" id="UP000002494">
    <property type="component" value="Chromosome 3"/>
</dbReference>
<dbReference type="GO" id="GO:0005576">
    <property type="term" value="C:extracellular region"/>
    <property type="evidence" value="ECO:0007669"/>
    <property type="project" value="UniProtKB-SubCell"/>
</dbReference>
<dbReference type="GO" id="GO:0001664">
    <property type="term" value="F:G protein-coupled receptor binding"/>
    <property type="evidence" value="ECO:0000315"/>
    <property type="project" value="RGD"/>
</dbReference>
<dbReference type="GO" id="GO:0005184">
    <property type="term" value="F:neuropeptide hormone activity"/>
    <property type="evidence" value="ECO:0000250"/>
    <property type="project" value="UniProtKB"/>
</dbReference>
<dbReference type="GO" id="GO:0031854">
    <property type="term" value="F:orexigenic neuropeptide QRFP receptor binding"/>
    <property type="evidence" value="ECO:0000250"/>
    <property type="project" value="UniProtKB"/>
</dbReference>
<dbReference type="GO" id="GO:0007625">
    <property type="term" value="P:grooming behavior"/>
    <property type="evidence" value="ECO:0000250"/>
    <property type="project" value="UniProtKB"/>
</dbReference>
<dbReference type="GO" id="GO:0007626">
    <property type="term" value="P:locomotory behavior"/>
    <property type="evidence" value="ECO:0000250"/>
    <property type="project" value="UniProtKB"/>
</dbReference>
<dbReference type="GO" id="GO:0007218">
    <property type="term" value="P:neuropeptide signaling pathway"/>
    <property type="evidence" value="ECO:0000250"/>
    <property type="project" value="UniProtKB"/>
</dbReference>
<dbReference type="GO" id="GO:0045777">
    <property type="term" value="P:positive regulation of blood pressure"/>
    <property type="evidence" value="ECO:0000250"/>
    <property type="project" value="UniProtKB"/>
</dbReference>
<dbReference type="GO" id="GO:0060259">
    <property type="term" value="P:regulation of feeding behavior"/>
    <property type="evidence" value="ECO:0000250"/>
    <property type="project" value="UniProtKB"/>
</dbReference>
<dbReference type="InterPro" id="IPR024565">
    <property type="entry name" value="P518"/>
</dbReference>
<dbReference type="PANTHER" id="PTHR36476">
    <property type="entry name" value="OREXIGENIC NEUROPEPTIDE QRFP"/>
    <property type="match status" value="1"/>
</dbReference>
<dbReference type="PANTHER" id="PTHR36476:SF1">
    <property type="entry name" value="OREXIGENIC NEUROPEPTIDE QRFP"/>
    <property type="match status" value="1"/>
</dbReference>
<dbReference type="Pfam" id="PF11109">
    <property type="entry name" value="RFamide_26RFa"/>
    <property type="match status" value="1"/>
</dbReference>
<reference evidence="7" key="1">
    <citation type="journal article" date="2003" name="J. Biol. Chem.">
        <title>A new peptidic ligand and its receptor regulating adrenal function in rats.</title>
        <authorList>
            <person name="Fukusumi S."/>
            <person name="Yoshida H."/>
            <person name="Fujii R."/>
            <person name="Maruyama M."/>
            <person name="Komatsu H."/>
            <person name="Habata Y."/>
            <person name="Shintani Y."/>
            <person name="Hinuma S."/>
            <person name="Fujino M."/>
        </authorList>
    </citation>
    <scope>NUCLEOTIDE SEQUENCE [MRNA]</scope>
    <scope>TISSUE SPECIFICITY</scope>
    <source>
        <tissue evidence="4">Brain</tissue>
    </source>
</reference>
<reference evidence="7" key="2">
    <citation type="journal article" date="2003" name="Proc. Natl. Acad. Sci. U.S.A.">
        <title>Identification of 26RFa, a hypothalamic neuropeptide of the RFamide peptide family with orexigenic activity.</title>
        <authorList>
            <person name="Chartrel N."/>
            <person name="Dujardin C."/>
            <person name="Anouar Y."/>
            <person name="Leprince J."/>
            <person name="Decker A."/>
            <person name="Clerens S."/>
            <person name="Do-Rego J.-C."/>
            <person name="Vandesande F."/>
            <person name="Llorens-Cortes C."/>
            <person name="Costentin J."/>
            <person name="Beauvillain J.-C."/>
            <person name="Vaudry H."/>
        </authorList>
    </citation>
    <scope>NUCLEOTIDE SEQUENCE [MRNA]</scope>
    <scope>TISSUE SPECIFICITY</scope>
    <source>
        <strain evidence="8">Wistar</strain>
        <tissue evidence="8">Hypothalamus</tissue>
    </source>
</reference>
<reference key="3">
    <citation type="journal article" date="2006" name="Proc. Natl. Acad. Sci. U.S.A.">
        <title>A neuropeptide ligand of the G protein-coupled receptor GPR103 regulates feeding, behavioral arousal, and blood pressure in mice.</title>
        <authorList>
            <person name="Takayasu S."/>
            <person name="Sakurai T."/>
            <person name="Iwasaki S."/>
            <person name="Teranishi H."/>
            <person name="Yamanaka A."/>
            <person name="Williams S.C."/>
            <person name="Iguchi H."/>
            <person name="Kawasawa Y.I."/>
            <person name="Ikeda Y."/>
            <person name="Sakakibara I."/>
            <person name="Ohno K."/>
            <person name="Ioka R.X."/>
            <person name="Murakami S."/>
            <person name="Dohmae N."/>
            <person name="Xie J."/>
            <person name="Suda T."/>
            <person name="Motoike T."/>
            <person name="Ohuchi T."/>
            <person name="Yanagisawa M."/>
            <person name="Sakai J."/>
        </authorList>
    </citation>
    <scope>PROTEIN SEQUENCE OF N-TERMINUS</scope>
    <scope>FUNCTION</scope>
    <scope>PYROGLUTAMATE FORMATION AT GLN-80</scope>
    <scope>AMIDATION AT PHE-122</scope>
</reference>
<protein>
    <recommendedName>
        <fullName>Orexigenic neuropeptide QRFP</fullName>
    </recommendedName>
    <alternativeName>
        <fullName>P518</fullName>
    </alternativeName>
    <component>
        <recommendedName>
            <fullName>QRF-amide</fullName>
        </recommendedName>
        <alternativeName>
            <fullName>Neuropeptide RF-amide</fullName>
        </alternativeName>
        <alternativeName>
            <fullName>Pyroglutamylated arginine-phenylalanine-amide peptide</fullName>
        </alternativeName>
    </component>
</protein>
<proteinExistence type="evidence at protein level"/>
<organism evidence="8">
    <name type="scientific">Rattus norvegicus</name>
    <name type="common">Rat</name>
    <dbReference type="NCBI Taxonomy" id="10116"/>
    <lineage>
        <taxon>Eukaryota</taxon>
        <taxon>Metazoa</taxon>
        <taxon>Chordata</taxon>
        <taxon>Craniata</taxon>
        <taxon>Vertebrata</taxon>
        <taxon>Euteleostomi</taxon>
        <taxon>Mammalia</taxon>
        <taxon>Eutheria</taxon>
        <taxon>Euarchontoglires</taxon>
        <taxon>Glires</taxon>
        <taxon>Rodentia</taxon>
        <taxon>Myomorpha</taxon>
        <taxon>Muroidea</taxon>
        <taxon>Muridae</taxon>
        <taxon>Murinae</taxon>
        <taxon>Rattus</taxon>
    </lineage>
</organism>
<keyword id="KW-0027">Amidation</keyword>
<keyword id="KW-0903">Direct protein sequencing</keyword>
<keyword id="KW-0527">Neuropeptide</keyword>
<keyword id="KW-0873">Pyrrolidone carboxylic acid</keyword>
<keyword id="KW-1185">Reference proteome</keyword>
<keyword id="KW-0964">Secreted</keyword>
<keyword id="KW-0732">Signal</keyword>
<accession>P83860</accession>